<reference key="1">
    <citation type="journal article" date="2006" name="J. Bacteriol.">
        <title>Complete genome sequence of Yersinia pestis strains Antiqua and Nepal516: evidence of gene reduction in an emerging pathogen.</title>
        <authorList>
            <person name="Chain P.S.G."/>
            <person name="Hu P."/>
            <person name="Malfatti S.A."/>
            <person name="Radnedge L."/>
            <person name="Larimer F."/>
            <person name="Vergez L.M."/>
            <person name="Worsham P."/>
            <person name="Chu M.C."/>
            <person name="Andersen G.L."/>
        </authorList>
    </citation>
    <scope>NUCLEOTIDE SEQUENCE [LARGE SCALE GENOMIC DNA]</scope>
    <source>
        <strain>Antiqua</strain>
    </source>
</reference>
<keyword id="KW-0963">Cytoplasm</keyword>
<keyword id="KW-0378">Hydrolase</keyword>
<keyword id="KW-0479">Metal-binding</keyword>
<keyword id="KW-0533">Nickel</keyword>
<protein>
    <recommendedName>
        <fullName evidence="1">Urease subunit alpha</fullName>
        <ecNumber evidence="1">3.5.1.5</ecNumber>
    </recommendedName>
    <alternativeName>
        <fullName evidence="1">Urea amidohydrolase subunit alpha</fullName>
    </alternativeName>
</protein>
<dbReference type="EC" id="3.5.1.5" evidence="1"/>
<dbReference type="EMBL" id="CP000308">
    <property type="protein sequence ID" value="ABG14359.1"/>
    <property type="molecule type" value="Genomic_DNA"/>
</dbReference>
<dbReference type="RefSeq" id="WP_002212229.1">
    <property type="nucleotide sequence ID" value="NZ_CP009906.1"/>
</dbReference>
<dbReference type="SMR" id="Q1C5B3"/>
<dbReference type="KEGG" id="ypa:YPA_2394"/>
<dbReference type="UniPathway" id="UPA00258">
    <property type="reaction ID" value="UER00370"/>
</dbReference>
<dbReference type="Proteomes" id="UP000001971">
    <property type="component" value="Chromosome"/>
</dbReference>
<dbReference type="GO" id="GO:0005737">
    <property type="term" value="C:cytoplasm"/>
    <property type="evidence" value="ECO:0007669"/>
    <property type="project" value="UniProtKB-SubCell"/>
</dbReference>
<dbReference type="GO" id="GO:0016151">
    <property type="term" value="F:nickel cation binding"/>
    <property type="evidence" value="ECO:0007669"/>
    <property type="project" value="UniProtKB-UniRule"/>
</dbReference>
<dbReference type="GO" id="GO:0009039">
    <property type="term" value="F:urease activity"/>
    <property type="evidence" value="ECO:0007669"/>
    <property type="project" value="UniProtKB-UniRule"/>
</dbReference>
<dbReference type="GO" id="GO:0043419">
    <property type="term" value="P:urea catabolic process"/>
    <property type="evidence" value="ECO:0007669"/>
    <property type="project" value="UniProtKB-UniRule"/>
</dbReference>
<dbReference type="CDD" id="cd00375">
    <property type="entry name" value="Urease_alpha"/>
    <property type="match status" value="1"/>
</dbReference>
<dbReference type="Gene3D" id="3.20.20.140">
    <property type="entry name" value="Metal-dependent hydrolases"/>
    <property type="match status" value="1"/>
</dbReference>
<dbReference type="Gene3D" id="2.30.40.10">
    <property type="entry name" value="Urease, subunit C, domain 1"/>
    <property type="match status" value="1"/>
</dbReference>
<dbReference type="HAMAP" id="MF_01953">
    <property type="entry name" value="Urease_alpha"/>
    <property type="match status" value="1"/>
</dbReference>
<dbReference type="InterPro" id="IPR006680">
    <property type="entry name" value="Amidohydro-rel"/>
</dbReference>
<dbReference type="InterPro" id="IPR011059">
    <property type="entry name" value="Metal-dep_hydrolase_composite"/>
</dbReference>
<dbReference type="InterPro" id="IPR032466">
    <property type="entry name" value="Metal_Hydrolase"/>
</dbReference>
<dbReference type="InterPro" id="IPR011612">
    <property type="entry name" value="Urease_alpha_N_dom"/>
</dbReference>
<dbReference type="InterPro" id="IPR050112">
    <property type="entry name" value="Urease_alpha_subunit"/>
</dbReference>
<dbReference type="InterPro" id="IPR017950">
    <property type="entry name" value="Urease_AS"/>
</dbReference>
<dbReference type="InterPro" id="IPR005848">
    <property type="entry name" value="Urease_asu"/>
</dbReference>
<dbReference type="InterPro" id="IPR017951">
    <property type="entry name" value="Urease_asu_c"/>
</dbReference>
<dbReference type="InterPro" id="IPR029754">
    <property type="entry name" value="Urease_Ni-bd"/>
</dbReference>
<dbReference type="NCBIfam" id="NF009686">
    <property type="entry name" value="PRK13207.1"/>
    <property type="match status" value="1"/>
</dbReference>
<dbReference type="NCBIfam" id="NF009834">
    <property type="entry name" value="PRK13309.1"/>
    <property type="match status" value="1"/>
</dbReference>
<dbReference type="NCBIfam" id="TIGR01792">
    <property type="entry name" value="urease_alph"/>
    <property type="match status" value="1"/>
</dbReference>
<dbReference type="PANTHER" id="PTHR43440">
    <property type="entry name" value="UREASE"/>
    <property type="match status" value="1"/>
</dbReference>
<dbReference type="PANTHER" id="PTHR43440:SF1">
    <property type="entry name" value="UREASE"/>
    <property type="match status" value="1"/>
</dbReference>
<dbReference type="Pfam" id="PF01979">
    <property type="entry name" value="Amidohydro_1"/>
    <property type="match status" value="1"/>
</dbReference>
<dbReference type="Pfam" id="PF00449">
    <property type="entry name" value="Urease_alpha"/>
    <property type="match status" value="1"/>
</dbReference>
<dbReference type="PRINTS" id="PR01752">
    <property type="entry name" value="UREASE"/>
</dbReference>
<dbReference type="SUPFAM" id="SSF51338">
    <property type="entry name" value="Composite domain of metallo-dependent hydrolases"/>
    <property type="match status" value="1"/>
</dbReference>
<dbReference type="SUPFAM" id="SSF51556">
    <property type="entry name" value="Metallo-dependent hydrolases"/>
    <property type="match status" value="1"/>
</dbReference>
<dbReference type="PROSITE" id="PS01120">
    <property type="entry name" value="UREASE_1"/>
    <property type="match status" value="1"/>
</dbReference>
<dbReference type="PROSITE" id="PS00145">
    <property type="entry name" value="UREASE_2"/>
    <property type="match status" value="1"/>
</dbReference>
<dbReference type="PROSITE" id="PS51368">
    <property type="entry name" value="UREASE_3"/>
    <property type="match status" value="1"/>
</dbReference>
<feature type="chain" id="PRO_1000070706" description="Urease subunit alpha">
    <location>
        <begin position="1"/>
        <end position="572"/>
    </location>
</feature>
<feature type="domain" description="Urease" evidence="1">
    <location>
        <begin position="134"/>
        <end position="572"/>
    </location>
</feature>
<feature type="active site" description="Proton donor" evidence="1">
    <location>
        <position position="325"/>
    </location>
</feature>
<feature type="binding site" evidence="1">
    <location>
        <position position="139"/>
    </location>
    <ligand>
        <name>Ni(2+)</name>
        <dbReference type="ChEBI" id="CHEBI:49786"/>
        <label>1</label>
    </ligand>
</feature>
<feature type="binding site" evidence="1">
    <location>
        <position position="141"/>
    </location>
    <ligand>
        <name>Ni(2+)</name>
        <dbReference type="ChEBI" id="CHEBI:49786"/>
        <label>1</label>
    </ligand>
</feature>
<feature type="binding site" description="via carbamate group" evidence="1">
    <location>
        <position position="222"/>
    </location>
    <ligand>
        <name>Ni(2+)</name>
        <dbReference type="ChEBI" id="CHEBI:49786"/>
        <label>1</label>
    </ligand>
</feature>
<feature type="binding site" description="via carbamate group" evidence="1">
    <location>
        <position position="222"/>
    </location>
    <ligand>
        <name>Ni(2+)</name>
        <dbReference type="ChEBI" id="CHEBI:49786"/>
        <label>2</label>
    </ligand>
</feature>
<feature type="binding site" evidence="1">
    <location>
        <position position="224"/>
    </location>
    <ligand>
        <name>substrate</name>
    </ligand>
</feature>
<feature type="binding site" evidence="1">
    <location>
        <position position="251"/>
    </location>
    <ligand>
        <name>Ni(2+)</name>
        <dbReference type="ChEBI" id="CHEBI:49786"/>
        <label>2</label>
    </ligand>
</feature>
<feature type="binding site" evidence="1">
    <location>
        <position position="277"/>
    </location>
    <ligand>
        <name>Ni(2+)</name>
        <dbReference type="ChEBI" id="CHEBI:49786"/>
        <label>2</label>
    </ligand>
</feature>
<feature type="binding site" evidence="1">
    <location>
        <position position="365"/>
    </location>
    <ligand>
        <name>Ni(2+)</name>
        <dbReference type="ChEBI" id="CHEBI:49786"/>
        <label>1</label>
    </ligand>
</feature>
<feature type="modified residue" description="N6-carboxylysine" evidence="1">
    <location>
        <position position="222"/>
    </location>
</feature>
<organism>
    <name type="scientific">Yersinia pestis bv. Antiqua (strain Antiqua)</name>
    <dbReference type="NCBI Taxonomy" id="360102"/>
    <lineage>
        <taxon>Bacteria</taxon>
        <taxon>Pseudomonadati</taxon>
        <taxon>Pseudomonadota</taxon>
        <taxon>Gammaproteobacteria</taxon>
        <taxon>Enterobacterales</taxon>
        <taxon>Yersiniaceae</taxon>
        <taxon>Yersinia</taxon>
    </lineage>
</organism>
<sequence>MPQISRQEYAGLFGPTTGDKIRLGDTNLFIEIEKDLRGYGEESVYGGGKSLRDGMGANNNLTRDNGVLDLVITNVTIVDARLGVIKADVGIRDGKIAGIGKSGNPGVMDGVTQGMVVGVSTDAISGEHLILTAAGIDSHIHLISPQQAYHALSNGVATFFGGGIGPTDGTNGTTVTPGPWNIRQMLRSIEGLPVNVGILGKGNSYGRGPLLEQAIAGVVGYKVHEDWGATANALRHALRMADEVDIQVSVHTDSLNECGYVEDTIDAFEGRTIHTFHTEGAGGGHAPDIIRVASQTNVLPSSTNPTLPYGVNSQAELFDMIMVCHNLNPNVPADVSFAESRVRPETIAAENVLHDMGVISMFSSDSQAMGRVGENWLRILQTADAMKAARGKLPEDAAGNDNFRVLRYVAKITINPAITQGVSHVIGSVEVGKMADLVLWDPRFFGAKPKMVIKGGMINWAAMGDPNASLPTPQPVFYRPMFGAMGKTLQDTCVTFVSQAALDDGVKEKAGLDRQVIAVKNCRTISKRDLVRNDQTPNIEVDPETFAVKVDGVHATCEPIATASMNQRYFFG</sequence>
<gene>
    <name evidence="1" type="primary">ureC</name>
    <name type="ordered locus">YPA_2394</name>
</gene>
<accession>Q1C5B3</accession>
<proteinExistence type="inferred from homology"/>
<evidence type="ECO:0000255" key="1">
    <source>
        <dbReference type="HAMAP-Rule" id="MF_01953"/>
    </source>
</evidence>
<comment type="catalytic activity">
    <reaction evidence="1">
        <text>urea + 2 H2O + H(+) = hydrogencarbonate + 2 NH4(+)</text>
        <dbReference type="Rhea" id="RHEA:20557"/>
        <dbReference type="ChEBI" id="CHEBI:15377"/>
        <dbReference type="ChEBI" id="CHEBI:15378"/>
        <dbReference type="ChEBI" id="CHEBI:16199"/>
        <dbReference type="ChEBI" id="CHEBI:17544"/>
        <dbReference type="ChEBI" id="CHEBI:28938"/>
        <dbReference type="EC" id="3.5.1.5"/>
    </reaction>
</comment>
<comment type="cofactor">
    <cofactor evidence="1">
        <name>Ni cation</name>
        <dbReference type="ChEBI" id="CHEBI:25516"/>
    </cofactor>
    <text evidence="1">Binds 2 nickel ions per subunit.</text>
</comment>
<comment type="pathway">
    <text evidence="1">Nitrogen metabolism; urea degradation; CO(2) and NH(3) from urea (urease route): step 1/1.</text>
</comment>
<comment type="subunit">
    <text evidence="1">Heterotrimer of UreA (gamma), UreB (beta) and UreC (alpha) subunits. Three heterotrimers associate to form the active enzyme.</text>
</comment>
<comment type="subcellular location">
    <subcellularLocation>
        <location evidence="1">Cytoplasm</location>
    </subcellularLocation>
</comment>
<comment type="PTM">
    <text evidence="1">Carboxylation allows a single lysine to coordinate two nickel ions.</text>
</comment>
<comment type="similarity">
    <text evidence="1">Belongs to the metallo-dependent hydrolases superfamily. Urease alpha subunit family.</text>
</comment>
<name>URE1_YERPA</name>